<proteinExistence type="inferred from homology"/>
<accession>P68977</accession>
<accession>P03249</accession>
<dbReference type="EMBL" id="Y16037">
    <property type="protein sequence ID" value="CAA75994.1"/>
    <property type="molecule type" value="Genomic_DNA"/>
</dbReference>
<dbReference type="GO" id="GO:0052031">
    <property type="term" value="P:symbiont-mediated perturbation of host defense response"/>
    <property type="evidence" value="ECO:0007669"/>
    <property type="project" value="InterPro"/>
</dbReference>
<dbReference type="GO" id="GO:0033668">
    <property type="term" value="P:symbiont-mediated suppression of host apoptosis"/>
    <property type="evidence" value="ECO:0007669"/>
    <property type="project" value="UniProtKB-KW"/>
</dbReference>
<dbReference type="InterPro" id="IPR004985">
    <property type="entry name" value="Adeno_E3-15"/>
</dbReference>
<dbReference type="Pfam" id="PF03307">
    <property type="entry name" value="Adeno_E3_15_3"/>
    <property type="match status" value="1"/>
</dbReference>
<feature type="chain" id="PRO_0000221748" description="Early E3B 14 kDa protein">
    <location>
        <begin position="1"/>
        <end position="128"/>
    </location>
</feature>
<organismHost>
    <name type="scientific">Homo sapiens</name>
    <name type="common">Human</name>
    <dbReference type="NCBI Taxonomy" id="9606"/>
</organismHost>
<reference key="1">
    <citation type="submission" date="1997-12" db="EMBL/GenBank/DDBJ databases">
        <title>Sequence analysis of group C human adenoviruses type 1 and 6 for five genes of region E3.</title>
        <authorList>
            <person name="Reichmann H."/>
            <person name="Schaarschmidt E."/>
            <person name="Geisler B."/>
            <person name="Hausmann J."/>
            <person name="Ortmann D."/>
            <person name="Bauer U."/>
            <person name="Flunker G."/>
            <person name="Seidel W."/>
        </authorList>
    </citation>
    <scope>NUCLEOTIDE SEQUENCE [GENOMIC DNA]</scope>
</reference>
<comment type="function">
    <text>Protects virus-infected cells from TNF-induced cytolysis.</text>
</comment>
<comment type="similarity">
    <text evidence="1">Belongs to the adenoviridae E3_15 family.</text>
</comment>
<organism>
    <name type="scientific">Human adenovirus C serotype 6</name>
    <name type="common">HAdV-6</name>
    <name type="synonym">Human adenovirus 6</name>
    <dbReference type="NCBI Taxonomy" id="10534"/>
    <lineage>
        <taxon>Viruses</taxon>
        <taxon>Varidnaviria</taxon>
        <taxon>Bamfordvirae</taxon>
        <taxon>Preplasmiviricota</taxon>
        <taxon>Tectiliviricetes</taxon>
        <taxon>Rowavirales</taxon>
        <taxon>Adenoviridae</taxon>
        <taxon>Mastadenovirus</taxon>
        <taxon>Human mastadenovirus C</taxon>
    </lineage>
</organism>
<evidence type="ECO:0000305" key="1"/>
<protein>
    <recommendedName>
        <fullName>Early E3B 14 kDa protein</fullName>
    </recommendedName>
</protein>
<sequence length="128" mass="14738">MTESLDLELDGINTEQRLLERRKAASERERLKQEVEDMVNLHQCKRGIFCVVKQAKLTYEKTTTGNRLSYKLPTQRQKLVLMVGEKPITVTQHSAETEGCLHFPYQGPEDLCTLIKTMCGIRDLIPFN</sequence>
<keyword id="KW-0244">Early protein</keyword>
<keyword id="KW-0945">Host-virus interaction</keyword>
<keyword id="KW-1085">Inhibition of host caspases by virus</keyword>
<keyword id="KW-1119">Modulation of host cell apoptosis by virus</keyword>
<name>E3145_ADE06</name>